<keyword id="KW-0963">Cytoplasm</keyword>
<keyword id="KW-0488">Methylation</keyword>
<keyword id="KW-0648">Protein biosynthesis</keyword>
<name>RF1_TRIV2</name>
<proteinExistence type="inferred from homology"/>
<evidence type="ECO:0000255" key="1">
    <source>
        <dbReference type="HAMAP-Rule" id="MF_00093"/>
    </source>
</evidence>
<sequence length="366" mass="41233">MAESYLLEKLKSVEQTFNELTRRLADPDTARNPDEYQKIAKSRSSLEEVVNTYETWKIAQEELIGARQVLKESNSDPELQEIAALEVNELEEKIKYLETRLKVLLLPRDPNDDKNIMLEIRAGTGGDEASIWAGDLLRMYSRYADTQGWRVKLVSESLGEMGGFKEVILEIQGDSVYSKLKFEAGVHRVQRVPATEAGGRVHTSTATVAIMPEVDEVEIHIDPKDIEMTTARSGGAGGQNVNKVETAVDLMHKPTGIRIFCTEERSQLQNKERAMQILRAKLYEIKLREQQEEVTSMRRSQVGTGSRSEKIRTYNYKDSRATDHRLGQNFSLNPVLEGDLETVIQSCISQDQQERLAELATSSAAG</sequence>
<reference key="1">
    <citation type="journal article" date="2014" name="Stand. Genomic Sci.">
        <title>Complete genome sequence of Anabaena variabilis ATCC 29413.</title>
        <authorList>
            <person name="Thiel T."/>
            <person name="Pratte B.S."/>
            <person name="Zhong J."/>
            <person name="Goodwin L."/>
            <person name="Copeland A."/>
            <person name="Lucas S."/>
            <person name="Han C."/>
            <person name="Pitluck S."/>
            <person name="Land M.L."/>
            <person name="Kyrpides N.C."/>
            <person name="Woyke T."/>
        </authorList>
    </citation>
    <scope>NUCLEOTIDE SEQUENCE [LARGE SCALE GENOMIC DNA]</scope>
    <source>
        <strain>ATCC 29413 / PCC 7937</strain>
    </source>
</reference>
<gene>
    <name evidence="1" type="primary">prfA</name>
    <name type="ordered locus">Ava_0721</name>
</gene>
<comment type="function">
    <text evidence="1">Peptide chain release factor 1 directs the termination of translation in response to the peptide chain termination codons UAG and UAA.</text>
</comment>
<comment type="subcellular location">
    <subcellularLocation>
        <location evidence="1">Cytoplasm</location>
    </subcellularLocation>
</comment>
<comment type="PTM">
    <text evidence="1">Methylated by PrmC. Methylation increases the termination efficiency of RF1.</text>
</comment>
<comment type="similarity">
    <text evidence="1">Belongs to the prokaryotic/mitochondrial release factor family.</text>
</comment>
<dbReference type="EMBL" id="CP000117">
    <property type="protein sequence ID" value="ABA20345.1"/>
    <property type="molecule type" value="Genomic_DNA"/>
</dbReference>
<dbReference type="SMR" id="Q3MF91"/>
<dbReference type="STRING" id="240292.Ava_0721"/>
<dbReference type="KEGG" id="ava:Ava_0721"/>
<dbReference type="eggNOG" id="COG0216">
    <property type="taxonomic scope" value="Bacteria"/>
</dbReference>
<dbReference type="HOGENOM" id="CLU_036856_0_1_3"/>
<dbReference type="Proteomes" id="UP000002533">
    <property type="component" value="Chromosome"/>
</dbReference>
<dbReference type="GO" id="GO:0005737">
    <property type="term" value="C:cytoplasm"/>
    <property type="evidence" value="ECO:0007669"/>
    <property type="project" value="UniProtKB-SubCell"/>
</dbReference>
<dbReference type="GO" id="GO:0016149">
    <property type="term" value="F:translation release factor activity, codon specific"/>
    <property type="evidence" value="ECO:0007669"/>
    <property type="project" value="UniProtKB-UniRule"/>
</dbReference>
<dbReference type="FunFam" id="3.30.160.20:FF:000004">
    <property type="entry name" value="Peptide chain release factor 1"/>
    <property type="match status" value="1"/>
</dbReference>
<dbReference type="FunFam" id="3.30.70.1660:FF:000002">
    <property type="entry name" value="Peptide chain release factor 1"/>
    <property type="match status" value="1"/>
</dbReference>
<dbReference type="FunFam" id="3.30.70.1660:FF:000014">
    <property type="entry name" value="Peptide chain release factor 1"/>
    <property type="match status" value="1"/>
</dbReference>
<dbReference type="Gene3D" id="3.30.160.20">
    <property type="match status" value="1"/>
</dbReference>
<dbReference type="Gene3D" id="3.30.70.1660">
    <property type="match status" value="2"/>
</dbReference>
<dbReference type="Gene3D" id="6.10.140.1950">
    <property type="match status" value="1"/>
</dbReference>
<dbReference type="HAMAP" id="MF_00093">
    <property type="entry name" value="Rel_fac_1"/>
    <property type="match status" value="1"/>
</dbReference>
<dbReference type="InterPro" id="IPR005139">
    <property type="entry name" value="PCRF"/>
</dbReference>
<dbReference type="InterPro" id="IPR000352">
    <property type="entry name" value="Pep_chain_release_fac_I"/>
</dbReference>
<dbReference type="InterPro" id="IPR045853">
    <property type="entry name" value="Pep_chain_release_fac_I_sf"/>
</dbReference>
<dbReference type="InterPro" id="IPR050057">
    <property type="entry name" value="Prokaryotic/Mito_RF"/>
</dbReference>
<dbReference type="InterPro" id="IPR004373">
    <property type="entry name" value="RF-1"/>
</dbReference>
<dbReference type="NCBIfam" id="TIGR00019">
    <property type="entry name" value="prfA"/>
    <property type="match status" value="1"/>
</dbReference>
<dbReference type="NCBIfam" id="NF001859">
    <property type="entry name" value="PRK00591.1"/>
    <property type="match status" value="1"/>
</dbReference>
<dbReference type="PANTHER" id="PTHR43804">
    <property type="entry name" value="LD18447P"/>
    <property type="match status" value="1"/>
</dbReference>
<dbReference type="PANTHER" id="PTHR43804:SF8">
    <property type="entry name" value="PEPTIDE CHAIN RELEASE FACTOR APG3, CHLOROPLASTIC"/>
    <property type="match status" value="1"/>
</dbReference>
<dbReference type="Pfam" id="PF03462">
    <property type="entry name" value="PCRF"/>
    <property type="match status" value="1"/>
</dbReference>
<dbReference type="Pfam" id="PF00472">
    <property type="entry name" value="RF-1"/>
    <property type="match status" value="1"/>
</dbReference>
<dbReference type="SMART" id="SM00937">
    <property type="entry name" value="PCRF"/>
    <property type="match status" value="1"/>
</dbReference>
<dbReference type="SUPFAM" id="SSF75620">
    <property type="entry name" value="Release factor"/>
    <property type="match status" value="1"/>
</dbReference>
<dbReference type="PROSITE" id="PS00745">
    <property type="entry name" value="RF_PROK_I"/>
    <property type="match status" value="1"/>
</dbReference>
<organism>
    <name type="scientific">Trichormus variabilis (strain ATCC 29413 / PCC 7937)</name>
    <name type="common">Anabaena variabilis</name>
    <dbReference type="NCBI Taxonomy" id="240292"/>
    <lineage>
        <taxon>Bacteria</taxon>
        <taxon>Bacillati</taxon>
        <taxon>Cyanobacteriota</taxon>
        <taxon>Cyanophyceae</taxon>
        <taxon>Nostocales</taxon>
        <taxon>Nostocaceae</taxon>
        <taxon>Trichormus</taxon>
    </lineage>
</organism>
<accession>Q3MF91</accession>
<feature type="chain" id="PRO_0000263229" description="Peptide chain release factor 1">
    <location>
        <begin position="1"/>
        <end position="366"/>
    </location>
</feature>
<feature type="modified residue" description="N5-methylglutamine" evidence="1">
    <location>
        <position position="239"/>
    </location>
</feature>
<protein>
    <recommendedName>
        <fullName evidence="1">Peptide chain release factor 1</fullName>
        <shortName evidence="1">RF-1</shortName>
    </recommendedName>
</protein>